<name>RL35_STRP6</name>
<organism>
    <name type="scientific">Streptococcus pyogenes serotype M6 (strain ATCC BAA-946 / MGAS10394)</name>
    <dbReference type="NCBI Taxonomy" id="286636"/>
    <lineage>
        <taxon>Bacteria</taxon>
        <taxon>Bacillati</taxon>
        <taxon>Bacillota</taxon>
        <taxon>Bacilli</taxon>
        <taxon>Lactobacillales</taxon>
        <taxon>Streptococcaceae</taxon>
        <taxon>Streptococcus</taxon>
    </lineage>
</organism>
<gene>
    <name evidence="1" type="primary">rpmI</name>
    <name type="ordered locus">M6_Spy0637</name>
</gene>
<sequence length="65" mass="7465">MPKQKTHRASAKRFKRTGSGGLKRFRAFTSHRFHGKTKKQRRHLRKAGLVSSGDFKRIKAMVTGL</sequence>
<keyword id="KW-0687">Ribonucleoprotein</keyword>
<keyword id="KW-0689">Ribosomal protein</keyword>
<comment type="similarity">
    <text evidence="1">Belongs to the bacterial ribosomal protein bL35 family.</text>
</comment>
<proteinExistence type="inferred from homology"/>
<protein>
    <recommendedName>
        <fullName evidence="1">Large ribosomal subunit protein bL35</fullName>
    </recommendedName>
    <alternativeName>
        <fullName evidence="3">50S ribosomal protein L35</fullName>
    </alternativeName>
</protein>
<reference key="1">
    <citation type="journal article" date="2004" name="J. Infect. Dis.">
        <title>Progress toward characterization of the group A Streptococcus metagenome: complete genome sequence of a macrolide-resistant serotype M6 strain.</title>
        <authorList>
            <person name="Banks D.J."/>
            <person name="Porcella S.F."/>
            <person name="Barbian K.D."/>
            <person name="Beres S.B."/>
            <person name="Philips L.E."/>
            <person name="Voyich J.M."/>
            <person name="DeLeo F.R."/>
            <person name="Martin J.M."/>
            <person name="Somerville G.A."/>
            <person name="Musser J.M."/>
        </authorList>
    </citation>
    <scope>NUCLEOTIDE SEQUENCE [LARGE SCALE GENOMIC DNA]</scope>
    <source>
        <strain>ATCC BAA-946 / MGAS10394</strain>
    </source>
</reference>
<dbReference type="EMBL" id="CP000003">
    <property type="protein sequence ID" value="AAT86772.1"/>
    <property type="molecule type" value="Genomic_DNA"/>
</dbReference>
<dbReference type="RefSeq" id="WP_002985151.1">
    <property type="nucleotide sequence ID" value="NC_006086.1"/>
</dbReference>
<dbReference type="SMR" id="Q5XCU1"/>
<dbReference type="GeneID" id="83690415"/>
<dbReference type="KEGG" id="spa:M6_Spy0637"/>
<dbReference type="HOGENOM" id="CLU_169643_3_1_9"/>
<dbReference type="Proteomes" id="UP000001167">
    <property type="component" value="Chromosome"/>
</dbReference>
<dbReference type="GO" id="GO:0022625">
    <property type="term" value="C:cytosolic large ribosomal subunit"/>
    <property type="evidence" value="ECO:0007669"/>
    <property type="project" value="TreeGrafter"/>
</dbReference>
<dbReference type="GO" id="GO:0003735">
    <property type="term" value="F:structural constituent of ribosome"/>
    <property type="evidence" value="ECO:0007669"/>
    <property type="project" value="InterPro"/>
</dbReference>
<dbReference type="GO" id="GO:0006412">
    <property type="term" value="P:translation"/>
    <property type="evidence" value="ECO:0007669"/>
    <property type="project" value="UniProtKB-UniRule"/>
</dbReference>
<dbReference type="FunFam" id="4.10.410.60:FF:000001">
    <property type="entry name" value="50S ribosomal protein L35"/>
    <property type="match status" value="1"/>
</dbReference>
<dbReference type="Gene3D" id="4.10.410.60">
    <property type="match status" value="1"/>
</dbReference>
<dbReference type="HAMAP" id="MF_00514">
    <property type="entry name" value="Ribosomal_bL35"/>
    <property type="match status" value="1"/>
</dbReference>
<dbReference type="InterPro" id="IPR001706">
    <property type="entry name" value="Ribosomal_bL35"/>
</dbReference>
<dbReference type="InterPro" id="IPR021137">
    <property type="entry name" value="Ribosomal_bL35-like"/>
</dbReference>
<dbReference type="InterPro" id="IPR018265">
    <property type="entry name" value="Ribosomal_bL35_CS"/>
</dbReference>
<dbReference type="InterPro" id="IPR037229">
    <property type="entry name" value="Ribosomal_bL35_sf"/>
</dbReference>
<dbReference type="NCBIfam" id="TIGR00001">
    <property type="entry name" value="rpmI_bact"/>
    <property type="match status" value="1"/>
</dbReference>
<dbReference type="PANTHER" id="PTHR33343">
    <property type="entry name" value="54S RIBOSOMAL PROTEIN BL35M"/>
    <property type="match status" value="1"/>
</dbReference>
<dbReference type="PANTHER" id="PTHR33343:SF1">
    <property type="entry name" value="LARGE RIBOSOMAL SUBUNIT PROTEIN BL35M"/>
    <property type="match status" value="1"/>
</dbReference>
<dbReference type="Pfam" id="PF01632">
    <property type="entry name" value="Ribosomal_L35p"/>
    <property type="match status" value="1"/>
</dbReference>
<dbReference type="PRINTS" id="PR00064">
    <property type="entry name" value="RIBOSOMALL35"/>
</dbReference>
<dbReference type="SUPFAM" id="SSF143034">
    <property type="entry name" value="L35p-like"/>
    <property type="match status" value="1"/>
</dbReference>
<dbReference type="PROSITE" id="PS00936">
    <property type="entry name" value="RIBOSOMAL_L35"/>
    <property type="match status" value="1"/>
</dbReference>
<accession>Q5XCU1</accession>
<evidence type="ECO:0000255" key="1">
    <source>
        <dbReference type="HAMAP-Rule" id="MF_00514"/>
    </source>
</evidence>
<evidence type="ECO:0000256" key="2">
    <source>
        <dbReference type="SAM" id="MobiDB-lite"/>
    </source>
</evidence>
<evidence type="ECO:0000305" key="3"/>
<feature type="chain" id="PRO_0000177436" description="Large ribosomal subunit protein bL35">
    <location>
        <begin position="1"/>
        <end position="65"/>
    </location>
</feature>
<feature type="region of interest" description="Disordered" evidence="2">
    <location>
        <begin position="1"/>
        <end position="20"/>
    </location>
</feature>
<feature type="compositionally biased region" description="Basic residues" evidence="2">
    <location>
        <begin position="1"/>
        <end position="16"/>
    </location>
</feature>